<reference key="1">
    <citation type="submission" date="2009-03" db="EMBL/GenBank/DDBJ databases">
        <title>Comparison of the complete genome sequences of Rhodococcus erythropolis PR4 and Rhodococcus opacus B4.</title>
        <authorList>
            <person name="Takarada H."/>
            <person name="Sekine M."/>
            <person name="Hosoyama A."/>
            <person name="Yamada R."/>
            <person name="Fujisawa T."/>
            <person name="Omata S."/>
            <person name="Shimizu A."/>
            <person name="Tsukatani N."/>
            <person name="Tanikawa S."/>
            <person name="Fujita N."/>
            <person name="Harayama S."/>
        </authorList>
    </citation>
    <scope>NUCLEOTIDE SEQUENCE [LARGE SCALE GENOMIC DNA]</scope>
    <source>
        <strain>B4</strain>
    </source>
</reference>
<name>Y3450_RHOOB</name>
<comment type="similarity">
    <text evidence="1">Belongs to the UPF0301 (AlgH) family.</text>
</comment>
<protein>
    <recommendedName>
        <fullName evidence="1">UPF0301 protein ROP_34500</fullName>
    </recommendedName>
</protein>
<organism>
    <name type="scientific">Rhodococcus opacus (strain B4)</name>
    <dbReference type="NCBI Taxonomy" id="632772"/>
    <lineage>
        <taxon>Bacteria</taxon>
        <taxon>Bacillati</taxon>
        <taxon>Actinomycetota</taxon>
        <taxon>Actinomycetes</taxon>
        <taxon>Mycobacteriales</taxon>
        <taxon>Nocardiaceae</taxon>
        <taxon>Rhodococcus</taxon>
    </lineage>
</organism>
<gene>
    <name type="ordered locus">ROP_34500</name>
</gene>
<evidence type="ECO:0000255" key="1">
    <source>
        <dbReference type="HAMAP-Rule" id="MF_00758"/>
    </source>
</evidence>
<proteinExistence type="inferred from homology"/>
<feature type="chain" id="PRO_1000148391" description="UPF0301 protein ROP_34500">
    <location>
        <begin position="1"/>
        <end position="201"/>
    </location>
</feature>
<accession>C1B7P4</accession>
<dbReference type="EMBL" id="AP011115">
    <property type="protein sequence ID" value="BAH51697.1"/>
    <property type="molecule type" value="Genomic_DNA"/>
</dbReference>
<dbReference type="RefSeq" id="WP_012690645.1">
    <property type="nucleotide sequence ID" value="NC_012522.1"/>
</dbReference>
<dbReference type="SMR" id="C1B7P4"/>
<dbReference type="STRING" id="632772.ROP_34500"/>
<dbReference type="KEGG" id="rop:ROP_34500"/>
<dbReference type="PATRIC" id="fig|632772.20.peg.3613"/>
<dbReference type="HOGENOM" id="CLU_057596_2_0_11"/>
<dbReference type="OrthoDB" id="9807486at2"/>
<dbReference type="Proteomes" id="UP000002212">
    <property type="component" value="Chromosome"/>
</dbReference>
<dbReference type="GO" id="GO:0005829">
    <property type="term" value="C:cytosol"/>
    <property type="evidence" value="ECO:0007669"/>
    <property type="project" value="TreeGrafter"/>
</dbReference>
<dbReference type="Gene3D" id="3.40.1740.10">
    <property type="entry name" value="VC0467-like"/>
    <property type="match status" value="1"/>
</dbReference>
<dbReference type="HAMAP" id="MF_00758">
    <property type="entry name" value="UPF0301"/>
    <property type="match status" value="1"/>
</dbReference>
<dbReference type="InterPro" id="IPR003774">
    <property type="entry name" value="AlgH-like"/>
</dbReference>
<dbReference type="NCBIfam" id="NF001269">
    <property type="entry name" value="PRK00228.2-1"/>
    <property type="match status" value="1"/>
</dbReference>
<dbReference type="NCBIfam" id="NF001272">
    <property type="entry name" value="PRK00228.2-4"/>
    <property type="match status" value="1"/>
</dbReference>
<dbReference type="PANTHER" id="PTHR30327">
    <property type="entry name" value="UNCHARACTERIZED PROTEIN YQGE"/>
    <property type="match status" value="1"/>
</dbReference>
<dbReference type="PANTHER" id="PTHR30327:SF1">
    <property type="entry name" value="UPF0301 PROTEIN YQGE"/>
    <property type="match status" value="1"/>
</dbReference>
<dbReference type="Pfam" id="PF02622">
    <property type="entry name" value="DUF179"/>
    <property type="match status" value="1"/>
</dbReference>
<dbReference type="SUPFAM" id="SSF143456">
    <property type="entry name" value="VC0467-like"/>
    <property type="match status" value="1"/>
</dbReference>
<sequence>MAHAEEPEDRTASTEPVVRPGSLLVSSTDLVEPAFRRTVIYVIEHNEAGSLGVVINRPSETAVHDVLPQWAPLTARPSALYVGGPVKRDAALCLATLRTGAQADGVRGLRRVHGRVVMVDLDSDPEVVAPLVEGVRIFAGYSGWTYGQLDSELQRDDWIVISALASDVLAPARVDVWAQVLRRQPLPLALLATHPIDVERN</sequence>